<accession>Q13164</accession>
<accession>Q16634</accession>
<accession>Q59F50</accession>
<accession>Q6QLU7</accession>
<accession>Q7L4P4</accession>
<accession>Q969G1</accession>
<accession>Q96G51</accession>
<evidence type="ECO:0000250" key="1"/>
<evidence type="ECO:0000250" key="2">
    <source>
        <dbReference type="UniProtKB" id="P0C865"/>
    </source>
</evidence>
<evidence type="ECO:0000255" key="3">
    <source>
        <dbReference type="PROSITE-ProRule" id="PRU00159"/>
    </source>
</evidence>
<evidence type="ECO:0000255" key="4">
    <source>
        <dbReference type="PROSITE-ProRule" id="PRU10027"/>
    </source>
</evidence>
<evidence type="ECO:0000256" key="5">
    <source>
        <dbReference type="SAM" id="MobiDB-lite"/>
    </source>
</evidence>
<evidence type="ECO:0000269" key="6">
    <source>
    </source>
</evidence>
<evidence type="ECO:0000269" key="7">
    <source>
    </source>
</evidence>
<evidence type="ECO:0000269" key="8">
    <source>
    </source>
</evidence>
<evidence type="ECO:0000269" key="9">
    <source>
    </source>
</evidence>
<evidence type="ECO:0000269" key="10">
    <source>
    </source>
</evidence>
<evidence type="ECO:0000269" key="11">
    <source>
    </source>
</evidence>
<evidence type="ECO:0000269" key="12">
    <source>
    </source>
</evidence>
<evidence type="ECO:0000269" key="13">
    <source>
    </source>
</evidence>
<evidence type="ECO:0000269" key="14">
    <source>
    </source>
</evidence>
<evidence type="ECO:0000269" key="15">
    <source ref="7"/>
</evidence>
<evidence type="ECO:0000303" key="16">
    <source>
    </source>
</evidence>
<evidence type="ECO:0000303" key="17">
    <source>
    </source>
</evidence>
<evidence type="ECO:0000303" key="18">
    <source ref="4"/>
</evidence>
<evidence type="ECO:0000305" key="19"/>
<evidence type="ECO:0007744" key="20">
    <source>
    </source>
</evidence>
<evidence type="ECO:0007829" key="21">
    <source>
        <dbReference type="PDB" id="4IC7"/>
    </source>
</evidence>
<evidence type="ECO:0007829" key="22">
    <source>
        <dbReference type="PDB" id="4IC8"/>
    </source>
</evidence>
<evidence type="ECO:0007829" key="23">
    <source>
        <dbReference type="PDB" id="5BYY"/>
    </source>
</evidence>
<evidence type="ECO:0007829" key="24">
    <source>
        <dbReference type="PDB" id="5BYZ"/>
    </source>
</evidence>
<evidence type="ECO:0007829" key="25">
    <source>
        <dbReference type="PDB" id="6HKN"/>
    </source>
</evidence>
<name>MK07_HUMAN</name>
<keyword id="KW-0002">3D-structure</keyword>
<keyword id="KW-0007">Acetylation</keyword>
<keyword id="KW-0025">Alternative splicing</keyword>
<keyword id="KW-0067">ATP-binding</keyword>
<keyword id="KW-0131">Cell cycle</keyword>
<keyword id="KW-0963">Cytoplasm</keyword>
<keyword id="KW-0221">Differentiation</keyword>
<keyword id="KW-0903">Direct protein sequencing</keyword>
<keyword id="KW-0418">Kinase</keyword>
<keyword id="KW-0547">Nucleotide-binding</keyword>
<keyword id="KW-0539">Nucleus</keyword>
<keyword id="KW-0597">Phosphoprotein</keyword>
<keyword id="KW-1267">Proteomics identification</keyword>
<keyword id="KW-1185">Reference proteome</keyword>
<keyword id="KW-0723">Serine/threonine-protein kinase</keyword>
<keyword id="KW-0808">Transferase</keyword>
<comment type="function">
    <text evidence="2 6 7 10 13 14">Plays a role in various cellular processes such as proliferation, differentiation and cell survival. The upstream activator of MAPK7 is the MAPK kinase MAP2K5. Upon activation, it translocates to the nucleus and phosphorylates various downstream targets including MEF2C. EGF activates MAPK7 through a Ras-independent and MAP2K5-dependent pathway. As part of the MAPK/ERK signaling pathway, acts as a negative regulator of apoptosis in cardiomyocytes via interaction with STUB1/CHIP and promotion of STUB1-mediated ubiquitination and degradation of ICER-type isoforms of CREM (By similarity). May have a role in muscle cell differentiation. May be important for endothelial function and maintenance of blood vessel integrity. MAP2K5 and MAPK7 interact specifically with one another and not with MEK1/ERK1 or MEK2/ERK2 pathways. Phosphorylates SGK1 at Ser-78 and this is required for growth factor-induced cell cycle progression. Involved in the regulation of p53/TP53 by disrupting the PML-MDM2 interaction.</text>
</comment>
<comment type="catalytic activity">
    <reaction>
        <text>L-seryl-[protein] + ATP = O-phospho-L-seryl-[protein] + ADP + H(+)</text>
        <dbReference type="Rhea" id="RHEA:17989"/>
        <dbReference type="Rhea" id="RHEA-COMP:9863"/>
        <dbReference type="Rhea" id="RHEA-COMP:11604"/>
        <dbReference type="ChEBI" id="CHEBI:15378"/>
        <dbReference type="ChEBI" id="CHEBI:29999"/>
        <dbReference type="ChEBI" id="CHEBI:30616"/>
        <dbReference type="ChEBI" id="CHEBI:83421"/>
        <dbReference type="ChEBI" id="CHEBI:456216"/>
        <dbReference type="EC" id="2.7.11.24"/>
    </reaction>
</comment>
<comment type="catalytic activity">
    <reaction>
        <text>L-threonyl-[protein] + ATP = O-phospho-L-threonyl-[protein] + ADP + H(+)</text>
        <dbReference type="Rhea" id="RHEA:46608"/>
        <dbReference type="Rhea" id="RHEA-COMP:11060"/>
        <dbReference type="Rhea" id="RHEA-COMP:11605"/>
        <dbReference type="ChEBI" id="CHEBI:15378"/>
        <dbReference type="ChEBI" id="CHEBI:30013"/>
        <dbReference type="ChEBI" id="CHEBI:30616"/>
        <dbReference type="ChEBI" id="CHEBI:61977"/>
        <dbReference type="ChEBI" id="CHEBI:456216"/>
        <dbReference type="EC" id="2.7.11.24"/>
    </reaction>
</comment>
<comment type="cofactor">
    <cofactor evidence="1">
        <name>Mg(2+)</name>
        <dbReference type="ChEBI" id="CHEBI:18420"/>
    </cofactor>
</comment>
<comment type="activity regulation">
    <text evidence="1 13 14">Activated by tyrosine and threonine phosphorylation (By similarity). Activated in response to hyperosmolarity, hydrogen peroxide, and epidermal growth factor (EGF).</text>
</comment>
<comment type="subunit">
    <text evidence="1 6 9 10 11 12">Interacts with MAP2K5. Forms oligomers (By similarity). Interacts with MEF2A, MEF2C and MEF2D; the interaction phosphorylates the MEF2s and enhances transcriptional activity of MEF2A, MEF2C but not MEF2D (By similarity). Interacts with SGK1. Preferentially interacts with PML isoform PML-4 but shows interaction also with its other isoforms: isoform PML-1, isoform PML-2, isoform PML-3 and isoform PML-6. Interacts (via N-terminal half) with HSP90AB1-CDC37 chaperone complex in resting cells; the interaction is MAP2K5-independent and prevents MAPK7 from ubiquitination and proteasomal degradation (PubMed:23428871). Interacts with STUB1/CHIP; the interaction is enhanced in the presence of IGF1 or MAP2K5 and promotes STUB1/CHIP E3 ligase activity (PubMed:20724525).</text>
</comment>
<comment type="interaction">
    <interactant intactId="EBI-1213983">
        <id>Q13164</id>
    </interactant>
    <interactant intactId="EBI-355275">
        <id>O95816</id>
        <label>BAG2</label>
    </interactant>
    <organismsDiffer>false</organismsDiffer>
    <experiments>3</experiments>
</comment>
<comment type="interaction">
    <interactant intactId="EBI-1213983">
        <id>Q13164</id>
    </interactant>
    <interactant intactId="EBI-1045350">
        <id>Q16204</id>
        <label>CCDC6</label>
    </interactant>
    <organismsDiffer>false</organismsDiffer>
    <experiments>3</experiments>
</comment>
<comment type="interaction">
    <interactant intactId="EBI-1213983">
        <id>Q13164</id>
    </interactant>
    <interactant intactId="EBI-307294">
        <id>Q13163</id>
        <label>MAP2K5</label>
    </interactant>
    <organismsDiffer>false</organismsDiffer>
    <experiments>8</experiments>
</comment>
<comment type="interaction">
    <interactant intactId="EBI-1213983">
        <id>Q13164</id>
    </interactant>
    <interactant intactId="EBI-16437973">
        <id>Q02078-6</id>
        <label>MEF2A</label>
    </interactant>
    <organismsDiffer>false</organismsDiffer>
    <experiments>3</experiments>
</comment>
<comment type="interaction">
    <interactant intactId="EBI-1213983">
        <id>Q13164</id>
    </interactant>
    <interactant intactId="EBI-295890">
        <id>P29590</id>
        <label>PML</label>
    </interactant>
    <organismsDiffer>false</organismsDiffer>
    <experiments>6</experiments>
</comment>
<comment type="interaction">
    <interactant intactId="EBI-1213983">
        <id>Q13164</id>
    </interactant>
    <interactant intactId="EBI-719691">
        <id>O00762</id>
        <label>UBE2C</label>
    </interactant>
    <organismsDiffer>false</organismsDiffer>
    <experiments>3</experiments>
</comment>
<comment type="interaction">
    <interactant intactId="EBI-1213983">
        <id>Q13164</id>
    </interactant>
    <interactant intactId="EBI-10247554">
        <id>Q5TZN3</id>
        <label>UBE2C</label>
    </interactant>
    <organismsDiffer>false</organismsDiffer>
    <experiments>3</experiments>
</comment>
<comment type="interaction">
    <interactant intactId="EBI-1213983">
        <id>Q13164</id>
    </interactant>
    <interactant intactId="EBI-10199654">
        <id>P17029</id>
        <label>ZKSCAN1</label>
    </interactant>
    <organismsDiffer>false</organismsDiffer>
    <experiments>3</experiments>
</comment>
<comment type="subcellular location">
    <subcellularLocation>
        <location>Cytoplasm</location>
    </subcellularLocation>
    <subcellularLocation>
        <location>Nucleus</location>
    </subcellularLocation>
    <subcellularLocation>
        <location>Nucleus</location>
        <location>PML body</location>
    </subcellularLocation>
    <text>Translocates to the nucleus upon activation.</text>
</comment>
<comment type="alternative products">
    <event type="alternative splicing"/>
    <isoform>
        <id>Q13164-1</id>
        <name>1</name>
        <sequence type="displayed"/>
    </isoform>
    <isoform>
        <id>Q13164-2</id>
        <name>2</name>
        <sequence type="described" ref="VSP_035198"/>
    </isoform>
    <isoform>
        <id>Q13164-3</id>
        <name>3</name>
        <sequence type="described" ref="VSP_035200"/>
    </isoform>
    <isoform>
        <id>Q13164-4</id>
        <name>4</name>
        <sequence type="described" ref="VSP_035199 VSP_035200"/>
    </isoform>
</comment>
<comment type="tissue specificity">
    <text evidence="12">Expressed in many adult tissues. Abundant in heart, placenta, lung, kidney and skeletal muscle. Not detectable in liver.</text>
</comment>
<comment type="domain">
    <text>The second proline-rich region may interact with actin targeting the kinase to a specific location in the cell.</text>
</comment>
<comment type="domain">
    <text>The TXY motif contains the threonine and tyrosine residues whose phosphorylation activates the MAP kinases.</text>
</comment>
<comment type="PTM">
    <text evidence="1 10">Dually phosphorylated on Thr-219 and Tyr-221, which activates the enzyme (By similarity). Autophosphorylated in vitro on threonine and tyrosine residues when the C-terminal part of the kinase, which could have a regulatory role, is absent.</text>
</comment>
<comment type="similarity">
    <text evidence="19">Belongs to the protein kinase superfamily. CMGC Ser/Thr protein kinase family. MAP kinase subfamily.</text>
</comment>
<comment type="sequence caution" evidence="19">
    <conflict type="frameshift">
        <sequence resource="EMBL-CDS" id="AAA81381"/>
    </conflict>
</comment>
<comment type="sequence caution" evidence="19">
    <conflict type="erroneous initiation">
        <sequence resource="EMBL-CDS" id="BAD92848"/>
    </conflict>
</comment>
<comment type="online information" name="Atlas of Genetics and Cytogenetics in Oncology and Haematology">
    <link uri="https://atlasgeneticsoncology.org/gene/41294/MAPK7"/>
</comment>
<sequence length="816" mass="88386">MAEPLKEEDGEDGSAEPPGPVKAEPAHTAASVAAKNLALLKARSFDVTFDVGDEYEIIETIGNGAYGVVSSARRRLTGQQVAIKKIPNAFDVVTNAKRTLRELKILKHFKHDNIIAIKDILRPTVPYGEFKSVYVVLDLMESDLHQIIHSSQPLTLEHVRYFLYQLLRGLKYMHSAQVIHRDLKPSNLLVNENCELKIGDFGMARGLCTSPAEHQYFMTEYVATRWYRAPELMLSLHEYTQAIDLWSVGCIFGEMLARRQLFPGKNYVHQLQLIMMVLGTPSPAVIQAVGAERVRAYIQSLPPRQPVPWETVYPGADRQALSLLGRMLRFEPSARISAAAALRHPFLAKYHDPDDEPDCAPPFDFAFDREALTRERIKEAIVAEIEDFHARREGIRQQIRFQPSLQPVASEPGCPDVEMPSPWAPSGDCAMESPPPAPPPCPGPAPDTIDLTLQPPPPVSEPAPPKKDGAISDNTKAALKAALLKSLRSRLRDGPSAPLEAPEPRKPVTAQERQREREEKRRRRQERAKEREKRRQERERKERGAGASGGPSTDPLAGLVLSDNDRSLLERWTRMARPAAPALTSVPAPAPAPTPTPTPVQPTSPPPGPVAQPTGPQPQSAGSTSGPVPQPACPPPGPAPHPTGPPGPIPVPAPPQIATSTSLLAAQSLVPPPGLPGSSTPGVLPYFPPGLPPPDAGGAPQSSMSESPDVNLVTQQLSKSQVEDPLPPVFSGTPKGSGAGYGVGFDLEEFLNQSFDMGVADGPQDGQADSASLSASLLADWLEGHGMNPADIESLQREIQMDSPMLLADLPDLQDP</sequence>
<feature type="initiator methionine" description="Removed" evidence="15">
    <location>
        <position position="1"/>
    </location>
</feature>
<feature type="chain" id="PRO_0000186260" description="Mitogen-activated protein kinase 7">
    <location>
        <begin position="2"/>
        <end position="816"/>
    </location>
</feature>
<feature type="domain" description="Protein kinase" evidence="3">
    <location>
        <begin position="55"/>
        <end position="347"/>
    </location>
</feature>
<feature type="region of interest" description="Disordered" evidence="5">
    <location>
        <begin position="1"/>
        <end position="26"/>
    </location>
</feature>
<feature type="region of interest" description="Required for cytoplasmic targeting" evidence="1">
    <location>
        <begin position="2"/>
        <end position="77"/>
    </location>
</feature>
<feature type="region of interest" description="Required for binding to MAP2K5" evidence="1">
    <location>
        <begin position="78"/>
        <end position="139"/>
    </location>
</feature>
<feature type="region of interest" description="Necessary for oligomerization" evidence="1">
    <location>
        <begin position="140"/>
        <end position="406"/>
    </location>
</feature>
<feature type="region of interest" description="Disordered" evidence="5">
    <location>
        <begin position="406"/>
        <end position="737"/>
    </location>
</feature>
<feature type="region of interest" description="May not be required for kinase activity; required to stimulate MEF2C activity" evidence="1">
    <location>
        <begin position="407"/>
        <end position="806"/>
    </location>
</feature>
<feature type="short sequence motif" description="TXY">
    <location>
        <begin position="219"/>
        <end position="221"/>
    </location>
</feature>
<feature type="short sequence motif" description="Nuclear localization signal" evidence="1">
    <location>
        <begin position="505"/>
        <end position="539"/>
    </location>
</feature>
<feature type="compositionally biased region" description="Pro residues" evidence="5">
    <location>
        <begin position="433"/>
        <end position="445"/>
    </location>
</feature>
<feature type="compositionally biased region" description="Pro residues" evidence="5">
    <location>
        <begin position="454"/>
        <end position="463"/>
    </location>
</feature>
<feature type="compositionally biased region" description="Low complexity" evidence="5">
    <location>
        <begin position="476"/>
        <end position="486"/>
    </location>
</feature>
<feature type="compositionally biased region" description="Basic and acidic residues" evidence="5">
    <location>
        <begin position="502"/>
        <end position="519"/>
    </location>
</feature>
<feature type="compositionally biased region" description="Basic and acidic residues" evidence="5">
    <location>
        <begin position="527"/>
        <end position="544"/>
    </location>
</feature>
<feature type="compositionally biased region" description="Basic and acidic residues" evidence="5">
    <location>
        <begin position="563"/>
        <end position="573"/>
    </location>
</feature>
<feature type="compositionally biased region" description="Low complexity" evidence="5">
    <location>
        <begin position="578"/>
        <end position="587"/>
    </location>
</feature>
<feature type="compositionally biased region" description="Pro residues" evidence="5">
    <location>
        <begin position="588"/>
        <end position="610"/>
    </location>
</feature>
<feature type="compositionally biased region" description="Pro residues" evidence="5">
    <location>
        <begin position="628"/>
        <end position="655"/>
    </location>
</feature>
<feature type="compositionally biased region" description="Low complexity" evidence="5">
    <location>
        <begin position="676"/>
        <end position="685"/>
    </location>
</feature>
<feature type="compositionally biased region" description="Pro residues" evidence="5">
    <location>
        <begin position="686"/>
        <end position="695"/>
    </location>
</feature>
<feature type="compositionally biased region" description="Polar residues" evidence="5">
    <location>
        <begin position="701"/>
        <end position="720"/>
    </location>
</feature>
<feature type="active site" description="Proton acceptor" evidence="3 4">
    <location>
        <position position="182"/>
    </location>
</feature>
<feature type="binding site" evidence="3">
    <location>
        <begin position="61"/>
        <end position="69"/>
    </location>
    <ligand>
        <name>ATP</name>
        <dbReference type="ChEBI" id="CHEBI:30616"/>
    </ligand>
</feature>
<feature type="binding site" evidence="3">
    <location>
        <position position="84"/>
    </location>
    <ligand>
        <name>ATP</name>
        <dbReference type="ChEBI" id="CHEBI:30616"/>
    </ligand>
</feature>
<feature type="modified residue" description="N-acetylalanine" evidence="15">
    <location>
        <position position="2"/>
    </location>
</feature>
<feature type="modified residue" description="Phosphoserine" evidence="20">
    <location>
        <position position="720"/>
    </location>
</feature>
<feature type="modified residue" description="Phosphothreonine" evidence="20">
    <location>
        <position position="733"/>
    </location>
</feature>
<feature type="splice variant" id="VSP_035198" description="In isoform 2." evidence="16">
    <location>
        <begin position="1"/>
        <end position="139"/>
    </location>
</feature>
<feature type="splice variant" id="VSP_035199" description="In isoform 4." evidence="18">
    <original>MAEPLKEEDGEDGSAEPPGPVKAEPAHTAASVAAKNLALLKARSFDVTFDVGDEYEIIETIGNGAYGVVSSARRRLTGQQVAIKKIPNAFDVVTNAKRTLRELKILKHFKHDNIIAIKDILRPTVPYGEFKSV</original>
    <variation>MLFFHTMPSAPMGSQGKAVTCLESEGCGEDGACPWSVIRPTHASLLPSPSS</variation>
    <location>
        <begin position="1"/>
        <end position="133"/>
    </location>
</feature>
<feature type="splice variant" id="VSP_035200" description="In isoform 3 and isoform 4." evidence="17 18">
    <original>DGPSAPLEAPEPRKPVTAQERQREREEKRRRRQERAKEREKRRQERERKERGAGASGGPSTDPLAGLVLSDNDRSLLERWTRMARPAAPALTSVPAPAPAPTPTPTPVQPTSPPPGPVAQPTGPQPQSAGSTSGPVPQPACPPPGPAPHPTGPPGPIPVPAPPQIATSTSLLAAQSLVPPPGLPGSSTPGVLPYFPPGLPPPDAGGAPQSSMSESPDVNLVTQQLSKSQVEDPLPPVFSGTPKGSGAGYGVGFDLEEFLNQSFDMGVADGPQDGQADSASLSASLLADWLEGHGMNPADIESLQREIQMDSPMLLADLPDLQDP</original>
    <variation>GALWAGRVGRGETWTWTRLQAFTFSPAQLPRKWPQRTPGGS</variation>
    <location>
        <begin position="493"/>
        <end position="816"/>
    </location>
</feature>
<feature type="sequence variant" id="VAR_046225" evidence="8">
    <original>R</original>
    <variation>H</variation>
    <location>
        <position position="535"/>
    </location>
</feature>
<feature type="sequence variant" id="VAR_042257" description="In dbSNP:rs56388327." evidence="8">
    <original>G</original>
    <variation>A</variation>
    <location>
        <position position="550"/>
    </location>
</feature>
<feature type="mutagenesis site" description="Loss activation by MAP2K5." evidence="13">
    <original>TEY</original>
    <variation>AEF</variation>
    <location>
        <begin position="219"/>
        <end position="221"/>
    </location>
</feature>
<feature type="sequence conflict" description="In Ref. 1; AAA81381." evidence="19" ref="1">
    <original>V</original>
    <variation>L</variation>
    <location>
        <position position="610"/>
    </location>
</feature>
<feature type="turn" evidence="22">
    <location>
        <begin position="45"/>
        <end position="48"/>
    </location>
</feature>
<feature type="strand" evidence="24">
    <location>
        <begin position="53"/>
        <end position="64"/>
    </location>
</feature>
<feature type="strand" evidence="24">
    <location>
        <begin position="67"/>
        <end position="74"/>
    </location>
</feature>
<feature type="turn" evidence="24">
    <location>
        <begin position="75"/>
        <end position="77"/>
    </location>
</feature>
<feature type="strand" evidence="24">
    <location>
        <begin position="80"/>
        <end position="86"/>
    </location>
</feature>
<feature type="turn" evidence="24">
    <location>
        <begin position="87"/>
        <end position="90"/>
    </location>
</feature>
<feature type="helix" evidence="24">
    <location>
        <begin position="93"/>
        <end position="108"/>
    </location>
</feature>
<feature type="strand" evidence="24">
    <location>
        <begin position="117"/>
        <end position="120"/>
    </location>
</feature>
<feature type="helix" evidence="24">
    <location>
        <begin position="127"/>
        <end position="129"/>
    </location>
</feature>
<feature type="strand" evidence="24">
    <location>
        <begin position="133"/>
        <end position="137"/>
    </location>
</feature>
<feature type="strand" evidence="25">
    <location>
        <begin position="141"/>
        <end position="143"/>
    </location>
</feature>
<feature type="helix" evidence="24">
    <location>
        <begin position="144"/>
        <end position="148"/>
    </location>
</feature>
<feature type="strand" evidence="24">
    <location>
        <begin position="150"/>
        <end position="152"/>
    </location>
</feature>
<feature type="helix" evidence="24">
    <location>
        <begin position="156"/>
        <end position="175"/>
    </location>
</feature>
<feature type="helix" evidence="24">
    <location>
        <begin position="185"/>
        <end position="187"/>
    </location>
</feature>
<feature type="strand" evidence="24">
    <location>
        <begin position="188"/>
        <end position="190"/>
    </location>
</feature>
<feature type="strand" evidence="24">
    <location>
        <begin position="196"/>
        <end position="198"/>
    </location>
</feature>
<feature type="helix" evidence="25">
    <location>
        <begin position="201"/>
        <end position="203"/>
    </location>
</feature>
<feature type="helix" evidence="24">
    <location>
        <begin position="214"/>
        <end position="216"/>
    </location>
</feature>
<feature type="helix" evidence="24">
    <location>
        <begin position="219"/>
        <end position="221"/>
    </location>
</feature>
<feature type="helix" evidence="24">
    <location>
        <begin position="225"/>
        <end position="227"/>
    </location>
</feature>
<feature type="helix" evidence="24">
    <location>
        <begin position="230"/>
        <end position="234"/>
    </location>
</feature>
<feature type="helix" evidence="24">
    <location>
        <begin position="242"/>
        <end position="257"/>
    </location>
</feature>
<feature type="helix" evidence="24">
    <location>
        <begin position="267"/>
        <end position="278"/>
    </location>
</feature>
<feature type="helix" evidence="24">
    <location>
        <begin position="283"/>
        <end position="287"/>
    </location>
</feature>
<feature type="strand" evidence="22">
    <location>
        <begin position="288"/>
        <end position="290"/>
    </location>
</feature>
<feature type="helix" evidence="24">
    <location>
        <begin position="292"/>
        <end position="300"/>
    </location>
</feature>
<feature type="helix" evidence="24">
    <location>
        <begin position="309"/>
        <end position="312"/>
    </location>
</feature>
<feature type="strand" evidence="23">
    <location>
        <begin position="313"/>
        <end position="316"/>
    </location>
</feature>
<feature type="helix" evidence="24">
    <location>
        <begin position="318"/>
        <end position="327"/>
    </location>
</feature>
<feature type="helix" evidence="24">
    <location>
        <begin position="332"/>
        <end position="334"/>
    </location>
</feature>
<feature type="helix" evidence="24">
    <location>
        <begin position="338"/>
        <end position="342"/>
    </location>
</feature>
<feature type="helix" evidence="24">
    <location>
        <begin position="345"/>
        <end position="347"/>
    </location>
</feature>
<feature type="turn" evidence="24">
    <location>
        <begin position="348"/>
        <end position="350"/>
    </location>
</feature>
<feature type="helix" evidence="24">
    <location>
        <begin position="353"/>
        <end position="355"/>
    </location>
</feature>
<feature type="helix" evidence="24">
    <location>
        <begin position="366"/>
        <end position="369"/>
    </location>
</feature>
<feature type="strand" evidence="21">
    <location>
        <begin position="370"/>
        <end position="372"/>
    </location>
</feature>
<feature type="helix" evidence="24">
    <location>
        <begin position="374"/>
        <end position="393"/>
    </location>
</feature>
<feature type="strand" evidence="21">
    <location>
        <begin position="396"/>
        <end position="398"/>
    </location>
</feature>
<dbReference type="EC" id="2.7.11.24"/>
<dbReference type="EMBL" id="U29725">
    <property type="protein sequence ID" value="AAA82931.1"/>
    <property type="molecule type" value="mRNA"/>
</dbReference>
<dbReference type="EMBL" id="U29726">
    <property type="protein sequence ID" value="AAA82932.1"/>
    <property type="molecule type" value="mRNA"/>
</dbReference>
<dbReference type="EMBL" id="U29727">
    <property type="protein sequence ID" value="AAA82933.1"/>
    <property type="molecule type" value="Genomic_DNA"/>
</dbReference>
<dbReference type="EMBL" id="U25278">
    <property type="protein sequence ID" value="AAA81381.1"/>
    <property type="status" value="ALT_FRAME"/>
    <property type="molecule type" value="mRNA"/>
</dbReference>
<dbReference type="EMBL" id="AY534741">
    <property type="protein sequence ID" value="AAS38577.1"/>
    <property type="molecule type" value="mRNA"/>
</dbReference>
<dbReference type="EMBL" id="AB209611">
    <property type="protein sequence ID" value="BAD92848.1"/>
    <property type="status" value="ALT_INIT"/>
    <property type="molecule type" value="mRNA"/>
</dbReference>
<dbReference type="EMBL" id="CH471212">
    <property type="protein sequence ID" value="EAW50883.1"/>
    <property type="molecule type" value="Genomic_DNA"/>
</dbReference>
<dbReference type="EMBL" id="CH471212">
    <property type="protein sequence ID" value="EAW50886.1"/>
    <property type="molecule type" value="Genomic_DNA"/>
</dbReference>
<dbReference type="EMBL" id="BC007404">
    <property type="protein sequence ID" value="AAH07404.1"/>
    <property type="molecule type" value="mRNA"/>
</dbReference>
<dbReference type="EMBL" id="BC007992">
    <property type="protein sequence ID" value="AAH07992.1"/>
    <property type="molecule type" value="mRNA"/>
</dbReference>
<dbReference type="EMBL" id="BC009963">
    <property type="protein sequence ID" value="AAH09963.1"/>
    <property type="molecule type" value="mRNA"/>
</dbReference>
<dbReference type="EMBL" id="BC030134">
    <property type="protein sequence ID" value="AAH30134.1"/>
    <property type="molecule type" value="mRNA"/>
</dbReference>
<dbReference type="CCDS" id="CCDS11206.1">
    <molecule id="Q13164-1"/>
</dbReference>
<dbReference type="CCDS" id="CCDS11207.1">
    <molecule id="Q13164-2"/>
</dbReference>
<dbReference type="PIR" id="B56708">
    <property type="entry name" value="B56708"/>
</dbReference>
<dbReference type="RefSeq" id="NP_002740.2">
    <molecule id="Q13164-1"/>
    <property type="nucleotide sequence ID" value="NM_002749.3"/>
</dbReference>
<dbReference type="RefSeq" id="NP_620601.1">
    <molecule id="Q13164-2"/>
    <property type="nucleotide sequence ID" value="NM_139032.3"/>
</dbReference>
<dbReference type="RefSeq" id="NP_620602.2">
    <molecule id="Q13164-1"/>
    <property type="nucleotide sequence ID" value="NM_139033.3"/>
</dbReference>
<dbReference type="RefSeq" id="NP_620603.2">
    <molecule id="Q13164-1"/>
    <property type="nucleotide sequence ID" value="NM_139034.3"/>
</dbReference>
<dbReference type="RefSeq" id="XP_011522259.1">
    <molecule id="Q13164-2"/>
    <property type="nucleotide sequence ID" value="XM_011523957.4"/>
</dbReference>
<dbReference type="RefSeq" id="XP_047292360.1">
    <molecule id="Q13164-1"/>
    <property type="nucleotide sequence ID" value="XM_047436404.1"/>
</dbReference>
<dbReference type="RefSeq" id="XP_047292361.1">
    <molecule id="Q13164-1"/>
    <property type="nucleotide sequence ID" value="XM_047436405.1"/>
</dbReference>
<dbReference type="RefSeq" id="XP_047292362.1">
    <molecule id="Q13164-1"/>
    <property type="nucleotide sequence ID" value="XM_047436406.1"/>
</dbReference>
<dbReference type="RefSeq" id="XP_054172650.1">
    <molecule id="Q13164-1"/>
    <property type="nucleotide sequence ID" value="XM_054316675.1"/>
</dbReference>
<dbReference type="RefSeq" id="XP_054172651.1">
    <molecule id="Q13164-1"/>
    <property type="nucleotide sequence ID" value="XM_054316676.1"/>
</dbReference>
<dbReference type="RefSeq" id="XP_054172653.1">
    <molecule id="Q13164-2"/>
    <property type="nucleotide sequence ID" value="XM_054316678.1"/>
</dbReference>
<dbReference type="PDB" id="2Q8Y">
    <property type="method" value="X-ray"/>
    <property type="resolution" value="2.00 A"/>
    <property type="chains" value="B=215-223"/>
</dbReference>
<dbReference type="PDB" id="4B99">
    <property type="method" value="X-ray"/>
    <property type="resolution" value="2.80 A"/>
    <property type="chains" value="A=1-397"/>
</dbReference>
<dbReference type="PDB" id="4IC7">
    <property type="method" value="X-ray"/>
    <property type="resolution" value="2.60 A"/>
    <property type="chains" value="A/D=1-431"/>
</dbReference>
<dbReference type="PDB" id="4IC8">
    <property type="method" value="X-ray"/>
    <property type="resolution" value="2.80 A"/>
    <property type="chains" value="A/B=1-431"/>
</dbReference>
<dbReference type="PDB" id="4ZSG">
    <property type="method" value="X-ray"/>
    <property type="resolution" value="1.79 A"/>
    <property type="chains" value="A=47-393"/>
</dbReference>
<dbReference type="PDB" id="4ZSJ">
    <property type="method" value="X-ray"/>
    <property type="resolution" value="2.48 A"/>
    <property type="chains" value="A=50-393"/>
</dbReference>
<dbReference type="PDB" id="4ZSL">
    <property type="method" value="X-ray"/>
    <property type="resolution" value="2.25 A"/>
    <property type="chains" value="A=53-393"/>
</dbReference>
<dbReference type="PDB" id="5BYY">
    <property type="method" value="X-ray"/>
    <property type="resolution" value="2.79 A"/>
    <property type="chains" value="A=49-394"/>
</dbReference>
<dbReference type="PDB" id="5BYZ">
    <property type="method" value="X-ray"/>
    <property type="resolution" value="1.65 A"/>
    <property type="chains" value="A=48-395"/>
</dbReference>
<dbReference type="PDB" id="5O7I">
    <property type="method" value="X-ray"/>
    <property type="resolution" value="2.38 A"/>
    <property type="chains" value="A=46-402"/>
</dbReference>
<dbReference type="PDB" id="6HKM">
    <property type="method" value="X-ray"/>
    <property type="resolution" value="2.47 A"/>
    <property type="chains" value="A=49-395"/>
</dbReference>
<dbReference type="PDB" id="6HKN">
    <property type="method" value="X-ray"/>
    <property type="resolution" value="2.33 A"/>
    <property type="chains" value="A=54-393"/>
</dbReference>
<dbReference type="PDB" id="7PUS">
    <property type="method" value="X-ray"/>
    <property type="resolution" value="2.59 A"/>
    <property type="chains" value="AAA=46-402"/>
</dbReference>
<dbReference type="PDBsum" id="2Q8Y"/>
<dbReference type="PDBsum" id="4B99"/>
<dbReference type="PDBsum" id="4IC7"/>
<dbReference type="PDBsum" id="4IC8"/>
<dbReference type="PDBsum" id="4ZSG"/>
<dbReference type="PDBsum" id="4ZSJ"/>
<dbReference type="PDBsum" id="4ZSL"/>
<dbReference type="PDBsum" id="5BYY"/>
<dbReference type="PDBsum" id="5BYZ"/>
<dbReference type="PDBsum" id="5O7I"/>
<dbReference type="PDBsum" id="6HKM"/>
<dbReference type="PDBsum" id="6HKN"/>
<dbReference type="PDBsum" id="7PUS"/>
<dbReference type="SMR" id="Q13164"/>
<dbReference type="BioGRID" id="111584">
    <property type="interactions" value="150"/>
</dbReference>
<dbReference type="FunCoup" id="Q13164">
    <property type="interactions" value="3690"/>
</dbReference>
<dbReference type="IntAct" id="Q13164">
    <property type="interactions" value="110"/>
</dbReference>
<dbReference type="MINT" id="Q13164"/>
<dbReference type="STRING" id="9606.ENSP00000311005"/>
<dbReference type="BindingDB" id="Q13164"/>
<dbReference type="ChEMBL" id="CHEMBL5332"/>
<dbReference type="DrugBank" id="DB00945">
    <property type="generic name" value="Acetylsalicylic acid"/>
</dbReference>
<dbReference type="DrugBank" id="DB02587">
    <property type="generic name" value="Colforsin"/>
</dbReference>
<dbReference type="DrugBank" id="DB12010">
    <property type="generic name" value="Fostamatinib"/>
</dbReference>
<dbReference type="DrugBank" id="DB01017">
    <property type="generic name" value="Minocycline"/>
</dbReference>
<dbReference type="DrugCentral" id="Q13164"/>
<dbReference type="GuidetoPHARMACOLOGY" id="2093"/>
<dbReference type="GlyGen" id="Q13164">
    <property type="glycosylation" value="6 sites, 1 O-linked glycan (1 site)"/>
</dbReference>
<dbReference type="iPTMnet" id="Q13164"/>
<dbReference type="PhosphoSitePlus" id="Q13164"/>
<dbReference type="BioMuta" id="MAPK7"/>
<dbReference type="DMDM" id="205371766"/>
<dbReference type="CPTAC" id="CPTAC-2870"/>
<dbReference type="CPTAC" id="CPTAC-2871"/>
<dbReference type="CPTAC" id="CPTAC-887"/>
<dbReference type="CPTAC" id="CPTAC-888"/>
<dbReference type="jPOST" id="Q13164"/>
<dbReference type="MassIVE" id="Q13164"/>
<dbReference type="PaxDb" id="9606-ENSP00000311005"/>
<dbReference type="PeptideAtlas" id="Q13164"/>
<dbReference type="ProteomicsDB" id="59203">
    <molecule id="Q13164-1"/>
</dbReference>
<dbReference type="ProteomicsDB" id="59204">
    <molecule id="Q13164-2"/>
</dbReference>
<dbReference type="ProteomicsDB" id="59205">
    <molecule id="Q13164-3"/>
</dbReference>
<dbReference type="ProteomicsDB" id="59206">
    <molecule id="Q13164-4"/>
</dbReference>
<dbReference type="Pumba" id="Q13164"/>
<dbReference type="Antibodypedia" id="4345">
    <property type="antibodies" value="670 antibodies from 40 providers"/>
</dbReference>
<dbReference type="DNASU" id="5598"/>
<dbReference type="Ensembl" id="ENST00000299612.11">
    <molecule id="Q13164-2"/>
    <property type="protein sequence ID" value="ENSP00000299612.7"/>
    <property type="gene ID" value="ENSG00000166484.20"/>
</dbReference>
<dbReference type="Ensembl" id="ENST00000308406.9">
    <molecule id="Q13164-1"/>
    <property type="protein sequence ID" value="ENSP00000311005.5"/>
    <property type="gene ID" value="ENSG00000166484.20"/>
</dbReference>
<dbReference type="Ensembl" id="ENST00000395602.8">
    <molecule id="Q13164-1"/>
    <property type="protein sequence ID" value="ENSP00000378966.4"/>
    <property type="gene ID" value="ENSG00000166484.20"/>
</dbReference>
<dbReference type="Ensembl" id="ENST00000395604.8">
    <molecule id="Q13164-1"/>
    <property type="protein sequence ID" value="ENSP00000378968.3"/>
    <property type="gene ID" value="ENSG00000166484.20"/>
</dbReference>
<dbReference type="GeneID" id="5598"/>
<dbReference type="KEGG" id="hsa:5598"/>
<dbReference type="MANE-Select" id="ENST00000395604.8">
    <property type="protein sequence ID" value="ENSP00000378968.3"/>
    <property type="RefSeq nucleotide sequence ID" value="NM_002749.4"/>
    <property type="RefSeq protein sequence ID" value="NP_002740.2"/>
</dbReference>
<dbReference type="UCSC" id="uc002gvn.4">
    <molecule id="Q13164-1"/>
    <property type="organism name" value="human"/>
</dbReference>
<dbReference type="AGR" id="HGNC:6880"/>
<dbReference type="CTD" id="5598"/>
<dbReference type="DisGeNET" id="5598"/>
<dbReference type="GeneCards" id="MAPK7"/>
<dbReference type="HGNC" id="HGNC:6880">
    <property type="gene designation" value="MAPK7"/>
</dbReference>
<dbReference type="HPA" id="ENSG00000166484">
    <property type="expression patterns" value="Low tissue specificity"/>
</dbReference>
<dbReference type="MalaCards" id="MAPK7"/>
<dbReference type="MIM" id="602521">
    <property type="type" value="gene"/>
</dbReference>
<dbReference type="neXtProt" id="NX_Q13164"/>
<dbReference type="OpenTargets" id="ENSG00000166484"/>
<dbReference type="PharmGKB" id="PA30625"/>
<dbReference type="VEuPathDB" id="HostDB:ENSG00000166484"/>
<dbReference type="eggNOG" id="KOG0660">
    <property type="taxonomic scope" value="Eukaryota"/>
</dbReference>
<dbReference type="GeneTree" id="ENSGT00940000160215"/>
<dbReference type="HOGENOM" id="CLU_008789_1_0_1"/>
<dbReference type="InParanoid" id="Q13164"/>
<dbReference type="OMA" id="RWTKMID"/>
<dbReference type="OrthoDB" id="192887at2759"/>
<dbReference type="PAN-GO" id="Q13164">
    <property type="GO annotations" value="4 GO annotations based on evolutionary models"/>
</dbReference>
<dbReference type="PhylomeDB" id="Q13164"/>
<dbReference type="TreeFam" id="TF105099"/>
<dbReference type="BRENDA" id="2.7.11.24">
    <property type="organism ID" value="2681"/>
</dbReference>
<dbReference type="PathwayCommons" id="Q13164"/>
<dbReference type="Reactome" id="R-HSA-198753">
    <property type="pathway name" value="ERK/MAPK targets"/>
</dbReference>
<dbReference type="Reactome" id="R-HSA-198765">
    <property type="pathway name" value="Signalling to ERK5"/>
</dbReference>
<dbReference type="Reactome" id="R-HSA-202670">
    <property type="pathway name" value="ERKs are inactivated"/>
</dbReference>
<dbReference type="Reactome" id="R-HSA-2559582">
    <property type="pathway name" value="Senescence-Associated Secretory Phenotype (SASP)"/>
</dbReference>
<dbReference type="Reactome" id="R-HSA-881907">
    <property type="pathway name" value="Gastrin-CREB signalling pathway via PKC and MAPK"/>
</dbReference>
<dbReference type="Reactome" id="R-HSA-8853659">
    <property type="pathway name" value="RET signaling"/>
</dbReference>
<dbReference type="SignaLink" id="Q13164"/>
<dbReference type="SIGNOR" id="Q13164"/>
<dbReference type="BioGRID-ORCS" id="5598">
    <property type="hits" value="18 hits in 1191 CRISPR screens"/>
</dbReference>
<dbReference type="ChiTaRS" id="MAPK7">
    <property type="organism name" value="human"/>
</dbReference>
<dbReference type="EvolutionaryTrace" id="Q13164"/>
<dbReference type="GeneWiki" id="MAPK7"/>
<dbReference type="GenomeRNAi" id="5598"/>
<dbReference type="Pharos" id="Q13164">
    <property type="development level" value="Tchem"/>
</dbReference>
<dbReference type="PRO" id="PR:Q13164"/>
<dbReference type="Proteomes" id="UP000005640">
    <property type="component" value="Chromosome 17"/>
</dbReference>
<dbReference type="RNAct" id="Q13164">
    <property type="molecule type" value="protein"/>
</dbReference>
<dbReference type="Bgee" id="ENSG00000166484">
    <property type="expression patterns" value="Expressed in lower esophagus mucosa and 139 other cell types or tissues"/>
</dbReference>
<dbReference type="ExpressionAtlas" id="Q13164">
    <property type="expression patterns" value="baseline and differential"/>
</dbReference>
<dbReference type="GO" id="GO:0005737">
    <property type="term" value="C:cytoplasm"/>
    <property type="evidence" value="ECO:0000314"/>
    <property type="project" value="UniProtKB"/>
</dbReference>
<dbReference type="GO" id="GO:0005829">
    <property type="term" value="C:cytosol"/>
    <property type="evidence" value="ECO:0000314"/>
    <property type="project" value="BHF-UCL"/>
</dbReference>
<dbReference type="GO" id="GO:0005654">
    <property type="term" value="C:nucleoplasm"/>
    <property type="evidence" value="ECO:0000314"/>
    <property type="project" value="HPA"/>
</dbReference>
<dbReference type="GO" id="GO:0005634">
    <property type="term" value="C:nucleus"/>
    <property type="evidence" value="ECO:0000314"/>
    <property type="project" value="UniProtKB"/>
</dbReference>
<dbReference type="GO" id="GO:0016605">
    <property type="term" value="C:PML body"/>
    <property type="evidence" value="ECO:0000314"/>
    <property type="project" value="UniProtKB"/>
</dbReference>
<dbReference type="GO" id="GO:0005524">
    <property type="term" value="F:ATP binding"/>
    <property type="evidence" value="ECO:0007669"/>
    <property type="project" value="UniProtKB-KW"/>
</dbReference>
<dbReference type="GO" id="GO:0004857">
    <property type="term" value="F:enzyme inhibitor activity"/>
    <property type="evidence" value="ECO:0000303"/>
    <property type="project" value="BHF-UCL"/>
</dbReference>
<dbReference type="GO" id="GO:0004707">
    <property type="term" value="F:MAP kinase activity"/>
    <property type="evidence" value="ECO:0000304"/>
    <property type="project" value="ProtInc"/>
</dbReference>
<dbReference type="GO" id="GO:0051019">
    <property type="term" value="F:mitogen-activated protein kinase binding"/>
    <property type="evidence" value="ECO:0000353"/>
    <property type="project" value="BHF-UCL"/>
</dbReference>
<dbReference type="GO" id="GO:0106310">
    <property type="term" value="F:protein serine kinase activity"/>
    <property type="evidence" value="ECO:0007669"/>
    <property type="project" value="RHEA"/>
</dbReference>
<dbReference type="GO" id="GO:0004674">
    <property type="term" value="F:protein serine/threonine kinase activity"/>
    <property type="evidence" value="ECO:0000318"/>
    <property type="project" value="GO_Central"/>
</dbReference>
<dbReference type="GO" id="GO:0007189">
    <property type="term" value="P:adenylate cyclase-activating G protein-coupled receptor signaling pathway"/>
    <property type="evidence" value="ECO:0000303"/>
    <property type="project" value="BHF-UCL"/>
</dbReference>
<dbReference type="GO" id="GO:0033173">
    <property type="term" value="P:calcineurin-NFAT signaling cascade"/>
    <property type="evidence" value="ECO:0007669"/>
    <property type="project" value="Ensembl"/>
</dbReference>
<dbReference type="GO" id="GO:0030154">
    <property type="term" value="P:cell differentiation"/>
    <property type="evidence" value="ECO:0007669"/>
    <property type="project" value="UniProtKB-KW"/>
</dbReference>
<dbReference type="GO" id="GO:0071363">
    <property type="term" value="P:cellular response to growth factor stimulus"/>
    <property type="evidence" value="ECO:0000316"/>
    <property type="project" value="BHF-UCL"/>
</dbReference>
<dbReference type="GO" id="GO:0070301">
    <property type="term" value="P:cellular response to hydrogen peroxide"/>
    <property type="evidence" value="ECO:0000315"/>
    <property type="project" value="BHF-UCL"/>
</dbReference>
<dbReference type="GO" id="GO:0071499">
    <property type="term" value="P:cellular response to laminar fluid shear stress"/>
    <property type="evidence" value="ECO:0000315"/>
    <property type="project" value="BHF-UCL"/>
</dbReference>
<dbReference type="GO" id="GO:0071560">
    <property type="term" value="P:cellular response to transforming growth factor beta stimulus"/>
    <property type="evidence" value="ECO:0000314"/>
    <property type="project" value="UniProtKB"/>
</dbReference>
<dbReference type="GO" id="GO:0035556">
    <property type="term" value="P:intracellular signal transduction"/>
    <property type="evidence" value="ECO:0000318"/>
    <property type="project" value="GO_Central"/>
</dbReference>
<dbReference type="GO" id="GO:0000165">
    <property type="term" value="P:MAPK cascade"/>
    <property type="evidence" value="ECO:0000250"/>
    <property type="project" value="UniProtKB"/>
</dbReference>
<dbReference type="GO" id="GO:0070885">
    <property type="term" value="P:negative regulation of calcineurin-NFAT signaling cascade"/>
    <property type="evidence" value="ECO:0007669"/>
    <property type="project" value="Ensembl"/>
</dbReference>
<dbReference type="GO" id="GO:2000352">
    <property type="term" value="P:negative regulation of endothelial cell apoptotic process"/>
    <property type="evidence" value="ECO:0000315"/>
    <property type="project" value="BHF-UCL"/>
</dbReference>
<dbReference type="GO" id="GO:2001240">
    <property type="term" value="P:negative regulation of extrinsic apoptotic signaling pathway in absence of ligand"/>
    <property type="evidence" value="ECO:0000316"/>
    <property type="project" value="BHF-UCL"/>
</dbReference>
<dbReference type="GO" id="GO:0034115">
    <property type="term" value="P:negative regulation of heterotypic cell-cell adhesion"/>
    <property type="evidence" value="ECO:0000316"/>
    <property type="project" value="BHF-UCL"/>
</dbReference>
<dbReference type="GO" id="GO:0050728">
    <property type="term" value="P:negative regulation of inflammatory response"/>
    <property type="evidence" value="ECO:0000304"/>
    <property type="project" value="BHF-UCL"/>
</dbReference>
<dbReference type="GO" id="GO:1902176">
    <property type="term" value="P:negative regulation of oxidative stress-induced intrinsic apoptotic signaling pathway"/>
    <property type="evidence" value="ECO:0000315"/>
    <property type="project" value="BHF-UCL"/>
</dbReference>
<dbReference type="GO" id="GO:0060761">
    <property type="term" value="P:negative regulation of response to cytokine stimulus"/>
    <property type="evidence" value="ECO:0000316"/>
    <property type="project" value="BHF-UCL"/>
</dbReference>
<dbReference type="GO" id="GO:0034392">
    <property type="term" value="P:negative regulation of smooth muscle cell apoptotic process"/>
    <property type="evidence" value="ECO:0000250"/>
    <property type="project" value="UniProtKB"/>
</dbReference>
<dbReference type="GO" id="GO:0051247">
    <property type="term" value="P:positive regulation of protein metabolic process"/>
    <property type="evidence" value="ECO:0000316"/>
    <property type="project" value="BHF-UCL"/>
</dbReference>
<dbReference type="GO" id="GO:0045944">
    <property type="term" value="P:positive regulation of transcription by RNA polymerase II"/>
    <property type="evidence" value="ECO:0000315"/>
    <property type="project" value="BHF-UCL"/>
</dbReference>
<dbReference type="GO" id="GO:0045765">
    <property type="term" value="P:regulation of angiogenesis"/>
    <property type="evidence" value="ECO:0007669"/>
    <property type="project" value="Ensembl"/>
</dbReference>
<dbReference type="GO" id="GO:0007165">
    <property type="term" value="P:signal transduction"/>
    <property type="evidence" value="ECO:0000304"/>
    <property type="project" value="ProtInc"/>
</dbReference>
<dbReference type="CDD" id="cd07855">
    <property type="entry name" value="STKc_ERK5"/>
    <property type="match status" value="1"/>
</dbReference>
<dbReference type="DisProt" id="DP02831"/>
<dbReference type="FunFam" id="1.10.510.10:FF:000013">
    <property type="entry name" value="Mitogen-activated protein kinase"/>
    <property type="match status" value="1"/>
</dbReference>
<dbReference type="FunFam" id="3.30.200.20:FF:000242">
    <property type="entry name" value="Mitogen-activated protein kinase"/>
    <property type="match status" value="1"/>
</dbReference>
<dbReference type="Gene3D" id="3.30.200.20">
    <property type="entry name" value="Phosphorylase Kinase, domain 1"/>
    <property type="match status" value="1"/>
</dbReference>
<dbReference type="Gene3D" id="1.10.510.10">
    <property type="entry name" value="Transferase(Phosphotransferase) domain 1"/>
    <property type="match status" value="1"/>
</dbReference>
<dbReference type="InterPro" id="IPR011009">
    <property type="entry name" value="Kinase-like_dom_sf"/>
</dbReference>
<dbReference type="InterPro" id="IPR050117">
    <property type="entry name" value="MAP_kinase"/>
</dbReference>
<dbReference type="InterPro" id="IPR003527">
    <property type="entry name" value="MAP_kinase_CS"/>
</dbReference>
<dbReference type="InterPro" id="IPR000719">
    <property type="entry name" value="Prot_kinase_dom"/>
</dbReference>
<dbReference type="InterPro" id="IPR017441">
    <property type="entry name" value="Protein_kinase_ATP_BS"/>
</dbReference>
<dbReference type="InterPro" id="IPR008271">
    <property type="entry name" value="Ser/Thr_kinase_AS"/>
</dbReference>
<dbReference type="PANTHER" id="PTHR24055">
    <property type="entry name" value="MITOGEN-ACTIVATED PROTEIN KINASE"/>
    <property type="match status" value="1"/>
</dbReference>
<dbReference type="Pfam" id="PF00069">
    <property type="entry name" value="Pkinase"/>
    <property type="match status" value="1"/>
</dbReference>
<dbReference type="SMART" id="SM00220">
    <property type="entry name" value="S_TKc"/>
    <property type="match status" value="1"/>
</dbReference>
<dbReference type="SUPFAM" id="SSF56112">
    <property type="entry name" value="Protein kinase-like (PK-like)"/>
    <property type="match status" value="1"/>
</dbReference>
<dbReference type="PROSITE" id="PS01351">
    <property type="entry name" value="MAPK"/>
    <property type="match status" value="1"/>
</dbReference>
<dbReference type="PROSITE" id="PS00107">
    <property type="entry name" value="PROTEIN_KINASE_ATP"/>
    <property type="match status" value="1"/>
</dbReference>
<dbReference type="PROSITE" id="PS50011">
    <property type="entry name" value="PROTEIN_KINASE_DOM"/>
    <property type="match status" value="1"/>
</dbReference>
<dbReference type="PROSITE" id="PS00108">
    <property type="entry name" value="PROTEIN_KINASE_ST"/>
    <property type="match status" value="1"/>
</dbReference>
<reference key="1">
    <citation type="journal article" date="1995" name="Biochem. Biophys. Res. Commun.">
        <title>Primary structure of BMK1: a new mammalian map kinase.</title>
        <authorList>
            <person name="Lee J.-D."/>
            <person name="Ulevitch R.J."/>
            <person name="Han J."/>
        </authorList>
    </citation>
    <scope>NUCLEOTIDE SEQUENCE [GENOMIC DNA / MRNA]</scope>
    <source>
        <tissue>Placenta</tissue>
    </source>
</reference>
<reference key="2">
    <citation type="journal article" date="1995" name="J. Biol. Chem.">
        <title>Components of a new human protein kinase signal transduction pathway.</title>
        <authorList>
            <person name="Zhou G."/>
            <person name="Bao Z.Q."/>
            <person name="Dixon J.E."/>
        </authorList>
    </citation>
    <scope>NUCLEOTIDE SEQUENCE [MRNA]</scope>
    <scope>INTERACTION WITH MAP2K5</scope>
    <scope>TISSUE SPECIFICITY</scope>
    <source>
        <tissue>Fetal brain</tissue>
    </source>
</reference>
<reference key="3">
    <citation type="journal article" date="2005" name="Gene">
        <title>Identification and characterization of mErk5-T, a novel Erk5/Bmk1 splice variant.</title>
        <authorList>
            <person name="McCaw B.J."/>
            <person name="Chow S.Y."/>
            <person name="Wong E.S.M."/>
            <person name="Tan K.L."/>
            <person name="Guo H."/>
            <person name="Guy G.R."/>
        </authorList>
    </citation>
    <scope>NUCLEOTIDE SEQUENCE [MRNA] (ISOFORM 3)</scope>
    <source>
        <tissue>Placenta</tissue>
    </source>
</reference>
<reference key="4">
    <citation type="submission" date="2005-03" db="EMBL/GenBank/DDBJ databases">
        <authorList>
            <person name="Totoki Y."/>
            <person name="Toyoda A."/>
            <person name="Takeda T."/>
            <person name="Sakaki Y."/>
            <person name="Tanaka A."/>
            <person name="Yokoyama S."/>
            <person name="Ohara O."/>
            <person name="Nagase T."/>
            <person name="Kikuno R.F."/>
        </authorList>
    </citation>
    <scope>NUCLEOTIDE SEQUENCE [LARGE SCALE MRNA] (ISOFORM 4)</scope>
    <source>
        <tissue>Spleen</tissue>
    </source>
</reference>
<reference key="5">
    <citation type="submission" date="2005-07" db="EMBL/GenBank/DDBJ databases">
        <authorList>
            <person name="Mural R.J."/>
            <person name="Istrail S."/>
            <person name="Sutton G.G."/>
            <person name="Florea L."/>
            <person name="Halpern A.L."/>
            <person name="Mobarry C.M."/>
            <person name="Lippert R."/>
            <person name="Walenz B."/>
            <person name="Shatkay H."/>
            <person name="Dew I."/>
            <person name="Miller J.R."/>
            <person name="Flanigan M.J."/>
            <person name="Edwards N.J."/>
            <person name="Bolanos R."/>
            <person name="Fasulo D."/>
            <person name="Halldorsson B.V."/>
            <person name="Hannenhalli S."/>
            <person name="Turner R."/>
            <person name="Yooseph S."/>
            <person name="Lu F."/>
            <person name="Nusskern D.R."/>
            <person name="Shue B.C."/>
            <person name="Zheng X.H."/>
            <person name="Zhong F."/>
            <person name="Delcher A.L."/>
            <person name="Huson D.H."/>
            <person name="Kravitz S.A."/>
            <person name="Mouchard L."/>
            <person name="Reinert K."/>
            <person name="Remington K.A."/>
            <person name="Clark A.G."/>
            <person name="Waterman M.S."/>
            <person name="Eichler E.E."/>
            <person name="Adams M.D."/>
            <person name="Hunkapiller M.W."/>
            <person name="Myers E.W."/>
            <person name="Venter J.C."/>
        </authorList>
    </citation>
    <scope>NUCLEOTIDE SEQUENCE [LARGE SCALE GENOMIC DNA]</scope>
</reference>
<reference key="6">
    <citation type="journal article" date="2004" name="Genome Res.">
        <title>The status, quality, and expansion of the NIH full-length cDNA project: the Mammalian Gene Collection (MGC).</title>
        <authorList>
            <consortium name="The MGC Project Team"/>
        </authorList>
    </citation>
    <scope>NUCLEOTIDE SEQUENCE [LARGE SCALE MRNA] (ISOFORMS 1 AND 2)</scope>
    <source>
        <tissue>Muscle</tissue>
        <tissue>Pancreas</tissue>
    </source>
</reference>
<reference key="7">
    <citation type="submission" date="2010-01" db="UniProtKB">
        <authorList>
            <person name="Bienvenut W.V."/>
            <person name="Fleming J."/>
            <person name="Leug H.Y."/>
        </authorList>
    </citation>
    <scope>PROTEIN SEQUENCE OF 2-35; 75-98; 119-131; 198-205; 296-343; 377-392; 468-485; 489-505; 544-571; 720-735 AND 798-816</scope>
    <scope>CLEAVAGE OF INITIATOR METHIONINE</scope>
    <scope>ACETYLATION AT ALA-2</scope>
    <scope>IDENTIFICATION BY MASS SPECTROMETRY</scope>
    <source>
        <tissue>Hepatoma</tissue>
    </source>
</reference>
<reference key="8">
    <citation type="journal article" date="1997" name="EMBO J.">
        <title>BMK1/ERK5 regulates serum-induced early gene expression through transcription factor MEF2C.</title>
        <authorList>
            <person name="Kato Y."/>
            <person name="Kravchenko V.V."/>
            <person name="Tapping R.I."/>
            <person name="Han J."/>
            <person name="Ulevitch R.J."/>
            <person name="Lee J.-D."/>
        </authorList>
    </citation>
    <scope>FUNCTION</scope>
    <scope>ACTIVITY REGULATION</scope>
    <scope>SUBCELLULAR LOCATION</scope>
    <scope>MUTAGENESIS OF 219-THR--TYR-221</scope>
</reference>
<reference key="9">
    <citation type="journal article" date="1998" name="Nature">
        <title>Bmk1/Erk5 is required for cell proliferation induced by epidermal growth factor.</title>
        <authorList>
            <person name="Kato Y."/>
            <person name="Tapping R.I."/>
            <person name="Huang S."/>
            <person name="Watson M.H."/>
            <person name="Ulevitch R.J."/>
            <person name="Lee J.-D."/>
        </authorList>
    </citation>
    <scope>FUNCTION</scope>
    <scope>ACTIVITY REGULATION</scope>
</reference>
<reference key="10">
    <citation type="journal article" date="2001" name="J. Biol. Chem.">
        <title>BMK1 mediates growth factor-induced cell proliferation through direct cellular activation of serum and glucocorticoid-inducible kinase.</title>
        <authorList>
            <person name="Hayashi M."/>
            <person name="Tapping R.I."/>
            <person name="Chao T.H."/>
            <person name="Lo J.F."/>
            <person name="King C.C."/>
            <person name="Yang Y."/>
            <person name="Lee J.D."/>
        </authorList>
    </citation>
    <scope>FUNCTION</scope>
    <scope>INTERACTION WITH SGK1</scope>
</reference>
<reference key="11">
    <citation type="journal article" date="2001" name="J. Biol. Chem.">
        <title>Granulocyte colony-stimulating factor induces ERK5 activation, which is differentially regulated by protein-tyrosine kinases and protein kinase C. Regulation of cell proliferation and survival.</title>
        <authorList>
            <person name="Dong F."/>
            <person name="Gutkind J.S."/>
            <person name="Larner A.C."/>
        </authorList>
    </citation>
    <scope>FUNCTION</scope>
</reference>
<reference key="12">
    <citation type="journal article" date="2008" name="Proc. Natl. Acad. Sci. U.S.A.">
        <title>A quantitative atlas of mitotic phosphorylation.</title>
        <authorList>
            <person name="Dephoure N."/>
            <person name="Zhou C."/>
            <person name="Villen J."/>
            <person name="Beausoleil S.A."/>
            <person name="Bakalarski C.E."/>
            <person name="Elledge S.J."/>
            <person name="Gygi S.P."/>
        </authorList>
    </citation>
    <scope>PHOSPHORYLATION [LARGE SCALE ANALYSIS] AT SER-720 AND THR-733</scope>
    <scope>IDENTIFICATION BY MASS SPECTROMETRY [LARGE SCALE ANALYSIS]</scope>
    <source>
        <tissue>Cervix carcinoma</tissue>
    </source>
</reference>
<reference key="13">
    <citation type="journal article" date="2009" name="Mol. Cell. Proteomics">
        <title>Large-scale proteomics analysis of the human kinome.</title>
        <authorList>
            <person name="Oppermann F.S."/>
            <person name="Gnad F."/>
            <person name="Olsen J.V."/>
            <person name="Hornberger R."/>
            <person name="Greff Z."/>
            <person name="Keri G."/>
            <person name="Mann M."/>
            <person name="Daub H."/>
        </authorList>
    </citation>
    <scope>IDENTIFICATION BY MASS SPECTROMETRY [LARGE SCALE ANALYSIS]</scope>
</reference>
<reference key="14">
    <citation type="journal article" date="2010" name="FASEB J.">
        <title>Novel role of C terminus of Hsc70-interacting protein (CHIP) ubiquitin ligase on inhibiting cardiac apoptosis and dysfunction via regulating ERK5-mediated degradation of inducible cAMP early repressor.</title>
        <authorList>
            <person name="Woo C.H."/>
            <person name="Le N.T."/>
            <person name="Shishido T."/>
            <person name="Chang E."/>
            <person name="Lee H."/>
            <person name="Heo K.S."/>
            <person name="Mickelsen D.M."/>
            <person name="Lu Y."/>
            <person name="McClain C."/>
            <person name="Spangenberg T."/>
            <person name="Yan C."/>
            <person name="Molina C.A."/>
            <person name="Yang J."/>
            <person name="Patterson C."/>
            <person name="Abe J."/>
        </authorList>
    </citation>
    <scope>INTERACTION WITH STUB1</scope>
</reference>
<reference key="15">
    <citation type="journal article" date="2013" name="Mol. Cell. Biol.">
        <title>Canonical and kinase activity-independent mechanisms for extracellular signal-regulated kinase 5 (ERK5) nuclear translocation require dissociation of Hsp90 from the ERK5-Cdc37 complex.</title>
        <authorList>
            <person name="Erazo T."/>
            <person name="Moreno A."/>
            <person name="Ruiz-Babot G."/>
            <person name="Rodriguez-Asiain A."/>
            <person name="Morrice N.A."/>
            <person name="Espadamala J."/>
            <person name="Bayascas J.R."/>
            <person name="Gomez N."/>
            <person name="Lizcano J.M."/>
        </authorList>
    </citation>
    <scope>INTERACTION WITH HSP90AB1</scope>
</reference>
<reference key="16">
    <citation type="journal article" date="2013" name="Oncogene">
        <title>BMK1 is involved in the regulation of p53 through disrupting the PML-MDM2 interaction.</title>
        <authorList>
            <person name="Yang Q."/>
            <person name="Liao L."/>
            <person name="Deng X."/>
            <person name="Chen R."/>
            <person name="Gray N.S."/>
            <person name="Yates J.R. III"/>
            <person name="Lee J.D."/>
        </authorList>
    </citation>
    <scope>FUNCTION</scope>
    <scope>SUBCELLULAR LOCATION</scope>
    <scope>PHOSPHORYLATION</scope>
    <scope>INTERACTION WITH PML</scope>
</reference>
<reference key="17">
    <citation type="journal article" date="2007" name="Nature">
        <title>Patterns of somatic mutation in human cancer genomes.</title>
        <authorList>
            <person name="Greenman C."/>
            <person name="Stephens P."/>
            <person name="Smith R."/>
            <person name="Dalgliesh G.L."/>
            <person name="Hunter C."/>
            <person name="Bignell G."/>
            <person name="Davies H."/>
            <person name="Teague J."/>
            <person name="Butler A."/>
            <person name="Stevens C."/>
            <person name="Edkins S."/>
            <person name="O'Meara S."/>
            <person name="Vastrik I."/>
            <person name="Schmidt E.E."/>
            <person name="Avis T."/>
            <person name="Barthorpe S."/>
            <person name="Bhamra G."/>
            <person name="Buck G."/>
            <person name="Choudhury B."/>
            <person name="Clements J."/>
            <person name="Cole J."/>
            <person name="Dicks E."/>
            <person name="Forbes S."/>
            <person name="Gray K."/>
            <person name="Halliday K."/>
            <person name="Harrison R."/>
            <person name="Hills K."/>
            <person name="Hinton J."/>
            <person name="Jenkinson A."/>
            <person name="Jones D."/>
            <person name="Menzies A."/>
            <person name="Mironenko T."/>
            <person name="Perry J."/>
            <person name="Raine K."/>
            <person name="Richardson D."/>
            <person name="Shepherd R."/>
            <person name="Small A."/>
            <person name="Tofts C."/>
            <person name="Varian J."/>
            <person name="Webb T."/>
            <person name="West S."/>
            <person name="Widaa S."/>
            <person name="Yates A."/>
            <person name="Cahill D.P."/>
            <person name="Louis D.N."/>
            <person name="Goldstraw P."/>
            <person name="Nicholson A.G."/>
            <person name="Brasseur F."/>
            <person name="Looijenga L."/>
            <person name="Weber B.L."/>
            <person name="Chiew Y.-E."/>
            <person name="DeFazio A."/>
            <person name="Greaves M.F."/>
            <person name="Green A.R."/>
            <person name="Campbell P."/>
            <person name="Birney E."/>
            <person name="Easton D.F."/>
            <person name="Chenevix-Trench G."/>
            <person name="Tan M.-H."/>
            <person name="Khoo S.K."/>
            <person name="Teh B.T."/>
            <person name="Yuen S.T."/>
            <person name="Leung S.Y."/>
            <person name="Wooster R."/>
            <person name="Futreal P.A."/>
            <person name="Stratton M.R."/>
        </authorList>
    </citation>
    <scope>VARIANTS [LARGE SCALE ANALYSIS] HIS-535 AND ALA-550</scope>
</reference>
<gene>
    <name type="primary">MAPK7</name>
    <name type="synonym">BMK1</name>
    <name type="synonym">ERK5</name>
    <name type="synonym">PRKM7</name>
</gene>
<proteinExistence type="evidence at protein level"/>
<organism>
    <name type="scientific">Homo sapiens</name>
    <name type="common">Human</name>
    <dbReference type="NCBI Taxonomy" id="9606"/>
    <lineage>
        <taxon>Eukaryota</taxon>
        <taxon>Metazoa</taxon>
        <taxon>Chordata</taxon>
        <taxon>Craniata</taxon>
        <taxon>Vertebrata</taxon>
        <taxon>Euteleostomi</taxon>
        <taxon>Mammalia</taxon>
        <taxon>Eutheria</taxon>
        <taxon>Euarchontoglires</taxon>
        <taxon>Primates</taxon>
        <taxon>Haplorrhini</taxon>
        <taxon>Catarrhini</taxon>
        <taxon>Hominidae</taxon>
        <taxon>Homo</taxon>
    </lineage>
</organism>
<protein>
    <recommendedName>
        <fullName>Mitogen-activated protein kinase 7</fullName>
        <shortName>MAP kinase 7</shortName>
        <shortName>MAPK 7</shortName>
        <ecNumber>2.7.11.24</ecNumber>
    </recommendedName>
    <alternativeName>
        <fullName>Big MAP kinase 1</fullName>
        <shortName>BMK-1</shortName>
    </alternativeName>
    <alternativeName>
        <fullName>Extracellular signal-regulated kinase 5</fullName>
        <shortName>ERK-5</shortName>
    </alternativeName>
</protein>